<evidence type="ECO:0000255" key="1">
    <source>
        <dbReference type="HAMAP-Rule" id="MF_00625"/>
    </source>
</evidence>
<dbReference type="EC" id="2.7.9.3" evidence="1"/>
<dbReference type="EMBL" id="CP000247">
    <property type="protein sequence ID" value="ABG69715.1"/>
    <property type="molecule type" value="Genomic_DNA"/>
</dbReference>
<dbReference type="RefSeq" id="WP_001298241.1">
    <property type="nucleotide sequence ID" value="NC_008253.1"/>
</dbReference>
<dbReference type="SMR" id="Q0TH64"/>
<dbReference type="GeneID" id="93775981"/>
<dbReference type="KEGG" id="ecp:ECP_1712"/>
<dbReference type="HOGENOM" id="CLU_032859_0_1_6"/>
<dbReference type="Proteomes" id="UP000009182">
    <property type="component" value="Chromosome"/>
</dbReference>
<dbReference type="GO" id="GO:0005737">
    <property type="term" value="C:cytoplasm"/>
    <property type="evidence" value="ECO:0007669"/>
    <property type="project" value="TreeGrafter"/>
</dbReference>
<dbReference type="GO" id="GO:0005524">
    <property type="term" value="F:ATP binding"/>
    <property type="evidence" value="ECO:0007669"/>
    <property type="project" value="UniProtKB-UniRule"/>
</dbReference>
<dbReference type="GO" id="GO:0000287">
    <property type="term" value="F:magnesium ion binding"/>
    <property type="evidence" value="ECO:0007669"/>
    <property type="project" value="UniProtKB-UniRule"/>
</dbReference>
<dbReference type="GO" id="GO:0004756">
    <property type="term" value="F:selenide, water dikinase activity"/>
    <property type="evidence" value="ECO:0007669"/>
    <property type="project" value="UniProtKB-UniRule"/>
</dbReference>
<dbReference type="GO" id="GO:0016260">
    <property type="term" value="P:selenocysteine biosynthetic process"/>
    <property type="evidence" value="ECO:0007669"/>
    <property type="project" value="InterPro"/>
</dbReference>
<dbReference type="CDD" id="cd02195">
    <property type="entry name" value="SelD"/>
    <property type="match status" value="1"/>
</dbReference>
<dbReference type="FunFam" id="3.30.1330.10:FF:000003">
    <property type="entry name" value="Selenide, water dikinase"/>
    <property type="match status" value="1"/>
</dbReference>
<dbReference type="FunFam" id="3.90.650.10:FF:000004">
    <property type="entry name" value="Selenide, water dikinase"/>
    <property type="match status" value="1"/>
</dbReference>
<dbReference type="Gene3D" id="3.90.650.10">
    <property type="entry name" value="PurM-like C-terminal domain"/>
    <property type="match status" value="1"/>
</dbReference>
<dbReference type="Gene3D" id="3.30.1330.10">
    <property type="entry name" value="PurM-like, N-terminal domain"/>
    <property type="match status" value="1"/>
</dbReference>
<dbReference type="HAMAP" id="MF_00625">
    <property type="entry name" value="SelD"/>
    <property type="match status" value="1"/>
</dbReference>
<dbReference type="InterPro" id="IPR010918">
    <property type="entry name" value="PurM-like_C_dom"/>
</dbReference>
<dbReference type="InterPro" id="IPR036676">
    <property type="entry name" value="PurM-like_C_sf"/>
</dbReference>
<dbReference type="InterPro" id="IPR016188">
    <property type="entry name" value="PurM-like_N"/>
</dbReference>
<dbReference type="InterPro" id="IPR036921">
    <property type="entry name" value="PurM-like_N_sf"/>
</dbReference>
<dbReference type="InterPro" id="IPR023061">
    <property type="entry name" value="SelD_I"/>
</dbReference>
<dbReference type="InterPro" id="IPR004536">
    <property type="entry name" value="SPS/SelD"/>
</dbReference>
<dbReference type="NCBIfam" id="NF002098">
    <property type="entry name" value="PRK00943.1"/>
    <property type="match status" value="1"/>
</dbReference>
<dbReference type="NCBIfam" id="TIGR00476">
    <property type="entry name" value="selD"/>
    <property type="match status" value="1"/>
</dbReference>
<dbReference type="PANTHER" id="PTHR10256:SF0">
    <property type="entry name" value="INACTIVE SELENIDE, WATER DIKINASE-LIKE PROTEIN-RELATED"/>
    <property type="match status" value="1"/>
</dbReference>
<dbReference type="PANTHER" id="PTHR10256">
    <property type="entry name" value="SELENIDE, WATER DIKINASE"/>
    <property type="match status" value="1"/>
</dbReference>
<dbReference type="Pfam" id="PF00586">
    <property type="entry name" value="AIRS"/>
    <property type="match status" value="1"/>
</dbReference>
<dbReference type="Pfam" id="PF02769">
    <property type="entry name" value="AIRS_C"/>
    <property type="match status" value="1"/>
</dbReference>
<dbReference type="PIRSF" id="PIRSF036407">
    <property type="entry name" value="Selenphspht_syn"/>
    <property type="match status" value="1"/>
</dbReference>
<dbReference type="SUPFAM" id="SSF56042">
    <property type="entry name" value="PurM C-terminal domain-like"/>
    <property type="match status" value="1"/>
</dbReference>
<dbReference type="SUPFAM" id="SSF55326">
    <property type="entry name" value="PurM N-terminal domain-like"/>
    <property type="match status" value="1"/>
</dbReference>
<protein>
    <recommendedName>
        <fullName evidence="1">Selenide, water dikinase</fullName>
        <ecNumber evidence="1">2.7.9.3</ecNumber>
    </recommendedName>
    <alternativeName>
        <fullName evidence="1">Selenium donor protein</fullName>
    </alternativeName>
    <alternativeName>
        <fullName evidence="1">Selenophosphate synthase</fullName>
    </alternativeName>
</protein>
<organism>
    <name type="scientific">Escherichia coli O6:K15:H31 (strain 536 / UPEC)</name>
    <dbReference type="NCBI Taxonomy" id="362663"/>
    <lineage>
        <taxon>Bacteria</taxon>
        <taxon>Pseudomonadati</taxon>
        <taxon>Pseudomonadota</taxon>
        <taxon>Gammaproteobacteria</taxon>
        <taxon>Enterobacterales</taxon>
        <taxon>Enterobacteriaceae</taxon>
        <taxon>Escherichia</taxon>
    </lineage>
</organism>
<name>SELD_ECOL5</name>
<proteinExistence type="inferred from homology"/>
<comment type="function">
    <text evidence="1">Synthesizes selenophosphate from selenide and ATP.</text>
</comment>
<comment type="catalytic activity">
    <reaction evidence="1">
        <text>hydrogenselenide + ATP + H2O = selenophosphate + AMP + phosphate + 2 H(+)</text>
        <dbReference type="Rhea" id="RHEA:18737"/>
        <dbReference type="ChEBI" id="CHEBI:15377"/>
        <dbReference type="ChEBI" id="CHEBI:15378"/>
        <dbReference type="ChEBI" id="CHEBI:16144"/>
        <dbReference type="ChEBI" id="CHEBI:29317"/>
        <dbReference type="ChEBI" id="CHEBI:30616"/>
        <dbReference type="ChEBI" id="CHEBI:43474"/>
        <dbReference type="ChEBI" id="CHEBI:456215"/>
        <dbReference type="EC" id="2.7.9.3"/>
    </reaction>
</comment>
<comment type="cofactor">
    <cofactor evidence="1">
        <name>Mg(2+)</name>
        <dbReference type="ChEBI" id="CHEBI:18420"/>
    </cofactor>
    <text evidence="1">Binds 1 Mg(2+) ion per monomer.</text>
</comment>
<comment type="subunit">
    <text evidence="1">Homodimer.</text>
</comment>
<comment type="similarity">
    <text evidence="1">Belongs to the selenophosphate synthase 1 family. Class I subfamily.</text>
</comment>
<keyword id="KW-0067">ATP-binding</keyword>
<keyword id="KW-0418">Kinase</keyword>
<keyword id="KW-0460">Magnesium</keyword>
<keyword id="KW-0479">Metal-binding</keyword>
<keyword id="KW-0547">Nucleotide-binding</keyword>
<keyword id="KW-0711">Selenium</keyword>
<keyword id="KW-0808">Transferase</keyword>
<feature type="chain" id="PRO_0000318670" description="Selenide, water dikinase">
    <location>
        <begin position="1"/>
        <end position="347"/>
    </location>
</feature>
<feature type="active site" evidence="1">
    <location>
        <position position="17"/>
    </location>
</feature>
<feature type="binding site" description="in other chain" evidence="1">
    <location>
        <position position="20"/>
    </location>
    <ligand>
        <name>ATP</name>
        <dbReference type="ChEBI" id="CHEBI:30616"/>
        <note>ligand shared between dimeric partners</note>
    </ligand>
</feature>
<feature type="binding site" description="in other chain" evidence="1">
    <location>
        <begin position="48"/>
        <end position="50"/>
    </location>
    <ligand>
        <name>ATP</name>
        <dbReference type="ChEBI" id="CHEBI:30616"/>
        <note>ligand shared between dimeric partners</note>
    </ligand>
</feature>
<feature type="binding site" evidence="1">
    <location>
        <position position="51"/>
    </location>
    <ligand>
        <name>Mg(2+)</name>
        <dbReference type="ChEBI" id="CHEBI:18420"/>
    </ligand>
</feature>
<feature type="binding site" description="in other chain" evidence="1">
    <location>
        <position position="68"/>
    </location>
    <ligand>
        <name>ATP</name>
        <dbReference type="ChEBI" id="CHEBI:30616"/>
        <note>ligand shared between dimeric partners</note>
    </ligand>
</feature>
<feature type="binding site" description="in other chain" evidence="1">
    <location>
        <position position="91"/>
    </location>
    <ligand>
        <name>ATP</name>
        <dbReference type="ChEBI" id="CHEBI:30616"/>
        <note>ligand shared between dimeric partners</note>
    </ligand>
</feature>
<feature type="binding site" evidence="1">
    <location>
        <position position="91"/>
    </location>
    <ligand>
        <name>Mg(2+)</name>
        <dbReference type="ChEBI" id="CHEBI:18420"/>
    </ligand>
</feature>
<feature type="binding site" evidence="1">
    <location>
        <begin position="139"/>
        <end position="141"/>
    </location>
    <ligand>
        <name>ATP</name>
        <dbReference type="ChEBI" id="CHEBI:30616"/>
        <note>ligand shared between dimeric partners</note>
    </ligand>
</feature>
<feature type="binding site" evidence="1">
    <location>
        <position position="227"/>
    </location>
    <ligand>
        <name>Mg(2+)</name>
        <dbReference type="ChEBI" id="CHEBI:18420"/>
    </ligand>
</feature>
<feature type="site" description="Important for catalytic activity" evidence="1">
    <location>
        <position position="20"/>
    </location>
</feature>
<reference key="1">
    <citation type="journal article" date="2006" name="Mol. Microbiol.">
        <title>Role of pathogenicity island-associated integrases in the genome plasticity of uropathogenic Escherichia coli strain 536.</title>
        <authorList>
            <person name="Hochhut B."/>
            <person name="Wilde C."/>
            <person name="Balling G."/>
            <person name="Middendorf B."/>
            <person name="Dobrindt U."/>
            <person name="Brzuszkiewicz E."/>
            <person name="Gottschalk G."/>
            <person name="Carniel E."/>
            <person name="Hacker J."/>
        </authorList>
    </citation>
    <scope>NUCLEOTIDE SEQUENCE [LARGE SCALE GENOMIC DNA]</scope>
    <source>
        <strain>536 / UPEC</strain>
    </source>
</reference>
<gene>
    <name evidence="1" type="primary">selD</name>
    <name type="ordered locus">ECP_1712</name>
</gene>
<accession>Q0TH64</accession>
<sequence>MSENSIRLTQYSHGAGCGCKISPKVLETILHSEQAKFVDPNLLVGNETRDDAAVYDLGNGTSVISTTDFFMPIVDNPFDFGRIAATNAISDIFAMGGKPIMAIAILGWPINKLSPEIAREVTEGGRYACRQAGIALAGGHSIDAPEPIFGLAVTGIVPTERVKKNSTAQAGCKLFLTKPLGIGVLTTAEKKSLLKPEHQGLATEVMCRMNIAGASFANIEGVKAMTDVTGFGLLGHLSEMCQGAGVQARVDYDAIPKLPGVEEYIKLGAVPGGTERNFASYGHLMGEMPREVRDLLCDPQTSGGLLLAVMPEAENEVKATAAEFGIELTAIGELVPARGGRAMVEIR</sequence>